<gene>
    <name evidence="1" type="primary">glk</name>
    <name type="ordered locus">c2927</name>
</gene>
<feature type="chain" id="PRO_0000215126" description="Glucokinase">
    <location>
        <begin position="1"/>
        <end position="321"/>
    </location>
</feature>
<feature type="binding site" evidence="1">
    <location>
        <begin position="8"/>
        <end position="13"/>
    </location>
    <ligand>
        <name>ATP</name>
        <dbReference type="ChEBI" id="CHEBI:30616"/>
    </ligand>
</feature>
<name>GLK_ECOL6</name>
<evidence type="ECO:0000255" key="1">
    <source>
        <dbReference type="HAMAP-Rule" id="MF_00524"/>
    </source>
</evidence>
<protein>
    <recommendedName>
        <fullName evidence="1">Glucokinase</fullName>
        <ecNumber evidence="1">2.7.1.2</ecNumber>
    </recommendedName>
    <alternativeName>
        <fullName evidence="1">Glucose kinase</fullName>
    </alternativeName>
</protein>
<sequence length="321" mass="34709">MTKYALVGDVGGTNARLALCDIASGEISQAKTYSGLDYPSLEAVIRVYLEEHKVEVKDGCIAIACPITGDWVAMTNHTWAFSIAEMKKNLGFSHLEIINDFTAVSMAIPMLKKEHLIQFGGAEPVEGKPIAVYGAGTGLGVAHLVHVDKRWVSLPGEGGHVDFAPNSEEEGIILEILRAEIGHVSAERVLSGPGLVNLYRAIVKADNRLPENLKPKDITERALADSCTDCRRALSLFCVIMGRFGGNLALNLGTFGGVFIAGGIVPRFLEFFKASGFRAAFEDKGRFKEYVHDIPVYLIVHDNPGLLGSGAHLRQTLGHIL</sequence>
<accession>Q8FFD4</accession>
<keyword id="KW-0067">ATP-binding</keyword>
<keyword id="KW-0963">Cytoplasm</keyword>
<keyword id="KW-0324">Glycolysis</keyword>
<keyword id="KW-0418">Kinase</keyword>
<keyword id="KW-0547">Nucleotide-binding</keyword>
<keyword id="KW-1185">Reference proteome</keyword>
<keyword id="KW-0808">Transferase</keyword>
<proteinExistence type="inferred from homology"/>
<dbReference type="EC" id="2.7.1.2" evidence="1"/>
<dbReference type="EMBL" id="AE014075">
    <property type="protein sequence ID" value="AAN81377.1"/>
    <property type="molecule type" value="Genomic_DNA"/>
</dbReference>
<dbReference type="RefSeq" id="WP_000170355.1">
    <property type="nucleotide sequence ID" value="NZ_CP051263.1"/>
</dbReference>
<dbReference type="SMR" id="Q8FFD4"/>
<dbReference type="STRING" id="199310.c2927"/>
<dbReference type="KEGG" id="ecc:c2927"/>
<dbReference type="eggNOG" id="COG0837">
    <property type="taxonomic scope" value="Bacteria"/>
</dbReference>
<dbReference type="HOGENOM" id="CLU_042582_1_0_6"/>
<dbReference type="BioCyc" id="ECOL199310:C2927-MONOMER"/>
<dbReference type="Proteomes" id="UP000001410">
    <property type="component" value="Chromosome"/>
</dbReference>
<dbReference type="GO" id="GO:0005829">
    <property type="term" value="C:cytosol"/>
    <property type="evidence" value="ECO:0007669"/>
    <property type="project" value="TreeGrafter"/>
</dbReference>
<dbReference type="GO" id="GO:0005524">
    <property type="term" value="F:ATP binding"/>
    <property type="evidence" value="ECO:0007669"/>
    <property type="project" value="UniProtKB-UniRule"/>
</dbReference>
<dbReference type="GO" id="GO:0005536">
    <property type="term" value="F:D-glucose binding"/>
    <property type="evidence" value="ECO:0007669"/>
    <property type="project" value="InterPro"/>
</dbReference>
<dbReference type="GO" id="GO:0004340">
    <property type="term" value="F:glucokinase activity"/>
    <property type="evidence" value="ECO:0007669"/>
    <property type="project" value="UniProtKB-UniRule"/>
</dbReference>
<dbReference type="GO" id="GO:0006096">
    <property type="term" value="P:glycolytic process"/>
    <property type="evidence" value="ECO:0007669"/>
    <property type="project" value="UniProtKB-UniRule"/>
</dbReference>
<dbReference type="CDD" id="cd24008">
    <property type="entry name" value="ASKHA_NBD_GLK"/>
    <property type="match status" value="1"/>
</dbReference>
<dbReference type="FunFam" id="3.30.420.40:FF:000045">
    <property type="entry name" value="Glucokinase"/>
    <property type="match status" value="1"/>
</dbReference>
<dbReference type="FunFam" id="3.40.367.20:FF:000002">
    <property type="entry name" value="Glucokinase"/>
    <property type="match status" value="1"/>
</dbReference>
<dbReference type="Gene3D" id="3.30.420.40">
    <property type="match status" value="1"/>
</dbReference>
<dbReference type="Gene3D" id="3.40.367.20">
    <property type="match status" value="1"/>
</dbReference>
<dbReference type="HAMAP" id="MF_00524">
    <property type="entry name" value="Glucokinase"/>
    <property type="match status" value="1"/>
</dbReference>
<dbReference type="InterPro" id="IPR043129">
    <property type="entry name" value="ATPase_NBD"/>
</dbReference>
<dbReference type="InterPro" id="IPR050201">
    <property type="entry name" value="Bacterial_glucokinase"/>
</dbReference>
<dbReference type="InterPro" id="IPR003836">
    <property type="entry name" value="Glucokinase"/>
</dbReference>
<dbReference type="NCBIfam" id="TIGR00749">
    <property type="entry name" value="glk"/>
    <property type="match status" value="1"/>
</dbReference>
<dbReference type="NCBIfam" id="NF001414">
    <property type="entry name" value="PRK00292.1-1"/>
    <property type="match status" value="1"/>
</dbReference>
<dbReference type="NCBIfam" id="NF001416">
    <property type="entry name" value="PRK00292.1-3"/>
    <property type="match status" value="1"/>
</dbReference>
<dbReference type="PANTHER" id="PTHR47690">
    <property type="entry name" value="GLUCOKINASE"/>
    <property type="match status" value="1"/>
</dbReference>
<dbReference type="PANTHER" id="PTHR47690:SF1">
    <property type="entry name" value="GLUCOKINASE"/>
    <property type="match status" value="1"/>
</dbReference>
<dbReference type="Pfam" id="PF02685">
    <property type="entry name" value="Glucokinase"/>
    <property type="match status" value="1"/>
</dbReference>
<dbReference type="SUPFAM" id="SSF53067">
    <property type="entry name" value="Actin-like ATPase domain"/>
    <property type="match status" value="1"/>
</dbReference>
<reference key="1">
    <citation type="journal article" date="2002" name="Proc. Natl. Acad. Sci. U.S.A.">
        <title>Extensive mosaic structure revealed by the complete genome sequence of uropathogenic Escherichia coli.</title>
        <authorList>
            <person name="Welch R.A."/>
            <person name="Burland V."/>
            <person name="Plunkett G. III"/>
            <person name="Redford P."/>
            <person name="Roesch P."/>
            <person name="Rasko D."/>
            <person name="Buckles E.L."/>
            <person name="Liou S.-R."/>
            <person name="Boutin A."/>
            <person name="Hackett J."/>
            <person name="Stroud D."/>
            <person name="Mayhew G.F."/>
            <person name="Rose D.J."/>
            <person name="Zhou S."/>
            <person name="Schwartz D.C."/>
            <person name="Perna N.T."/>
            <person name="Mobley H.L.T."/>
            <person name="Donnenberg M.S."/>
            <person name="Blattner F.R."/>
        </authorList>
    </citation>
    <scope>NUCLEOTIDE SEQUENCE [LARGE SCALE GENOMIC DNA]</scope>
    <source>
        <strain>CFT073 / ATCC 700928 / UPEC</strain>
    </source>
</reference>
<comment type="function">
    <text>Not highly important in E.coli as glucose is transported into the cell by the PTS system already as glucose 6-phosphate.</text>
</comment>
<comment type="catalytic activity">
    <reaction evidence="1">
        <text>D-glucose + ATP = D-glucose 6-phosphate + ADP + H(+)</text>
        <dbReference type="Rhea" id="RHEA:17825"/>
        <dbReference type="ChEBI" id="CHEBI:4167"/>
        <dbReference type="ChEBI" id="CHEBI:15378"/>
        <dbReference type="ChEBI" id="CHEBI:30616"/>
        <dbReference type="ChEBI" id="CHEBI:61548"/>
        <dbReference type="ChEBI" id="CHEBI:456216"/>
        <dbReference type="EC" id="2.7.1.2"/>
    </reaction>
</comment>
<comment type="subcellular location">
    <subcellularLocation>
        <location evidence="1">Cytoplasm</location>
    </subcellularLocation>
</comment>
<comment type="similarity">
    <text evidence="1">Belongs to the bacterial glucokinase family.</text>
</comment>
<organism>
    <name type="scientific">Escherichia coli O6:H1 (strain CFT073 / ATCC 700928 / UPEC)</name>
    <dbReference type="NCBI Taxonomy" id="199310"/>
    <lineage>
        <taxon>Bacteria</taxon>
        <taxon>Pseudomonadati</taxon>
        <taxon>Pseudomonadota</taxon>
        <taxon>Gammaproteobacteria</taxon>
        <taxon>Enterobacterales</taxon>
        <taxon>Enterobacteriaceae</taxon>
        <taxon>Escherichia</taxon>
    </lineage>
</organism>